<organism>
    <name type="scientific">Methanococcus maripaludis (strain C5 / ATCC BAA-1333)</name>
    <dbReference type="NCBI Taxonomy" id="402880"/>
    <lineage>
        <taxon>Archaea</taxon>
        <taxon>Methanobacteriati</taxon>
        <taxon>Methanobacteriota</taxon>
        <taxon>Methanomada group</taxon>
        <taxon>Methanococci</taxon>
        <taxon>Methanococcales</taxon>
        <taxon>Methanococcaceae</taxon>
        <taxon>Methanococcus</taxon>
    </lineage>
</organism>
<gene>
    <name evidence="1" type="primary">rpl3</name>
    <name type="ordered locus">MmarC5_0033</name>
</gene>
<accession>A4FVY2</accession>
<proteinExistence type="inferred from homology"/>
<reference key="1">
    <citation type="submission" date="2007-03" db="EMBL/GenBank/DDBJ databases">
        <title>Complete sequence of chromosome of Methanococcus maripaludis C5.</title>
        <authorList>
            <consortium name="US DOE Joint Genome Institute"/>
            <person name="Copeland A."/>
            <person name="Lucas S."/>
            <person name="Lapidus A."/>
            <person name="Barry K."/>
            <person name="Glavina del Rio T."/>
            <person name="Dalin E."/>
            <person name="Tice H."/>
            <person name="Pitluck S."/>
            <person name="Chertkov O."/>
            <person name="Brettin T."/>
            <person name="Bruce D."/>
            <person name="Han C."/>
            <person name="Detter J.C."/>
            <person name="Schmutz J."/>
            <person name="Larimer F."/>
            <person name="Land M."/>
            <person name="Hauser L."/>
            <person name="Kyrpides N."/>
            <person name="Mikhailova N."/>
            <person name="Sieprawska-Lupa M."/>
            <person name="Whitman W.B."/>
            <person name="Richardson P."/>
        </authorList>
    </citation>
    <scope>NUCLEOTIDE SEQUENCE [LARGE SCALE GENOMIC DNA]</scope>
    <source>
        <strain>C5 / ATCC BAA-1333</strain>
    </source>
</reference>
<sequence>MGMKKNRPRRGSLAFSPRKRAKKLVPKIRSWPADKKVGLQAFPVYKAGTTHALLIENNPKSPNNGQEVFTPVTVLETPDVTVAGIRLYEKTTKGLKALTEVWAEQLDGDLGRKLTLAKKEEKKTADALDAVVEKATEVRAIVHTNPKTTGIPKKKPEVVEIRIGGSSVAERLAYAKEILGKTLAIGDVFEAGEIIDTLAITKGKGFQGSVKRWGIKVQFGKHQRKGVGRHTGSIGPWRPRRVMWTVPLPGQMGFHQRTEYNKRILKLGSEGAEITPKGGFLNYGAVKNGYVVVKGTVQGPAKRLVVLRGSVRAAEDKFGLPEVAYISTESKQGN</sequence>
<comment type="function">
    <text evidence="1">One of the primary rRNA binding proteins, it binds directly near the 3'-end of the 23S rRNA, where it nucleates assembly of the 50S subunit.</text>
</comment>
<comment type="subunit">
    <text evidence="1">Part of the 50S ribosomal subunit. Forms a cluster with proteins L14 and L24e.</text>
</comment>
<comment type="similarity">
    <text evidence="1">Belongs to the universal ribosomal protein uL3 family.</text>
</comment>
<name>RL3_METM5</name>
<protein>
    <recommendedName>
        <fullName evidence="1">Large ribosomal subunit protein uL3</fullName>
    </recommendedName>
    <alternativeName>
        <fullName evidence="3">50S ribosomal protein L3</fullName>
    </alternativeName>
</protein>
<dbReference type="EMBL" id="CP000609">
    <property type="protein sequence ID" value="ABO34350.1"/>
    <property type="molecule type" value="Genomic_DNA"/>
</dbReference>
<dbReference type="RefSeq" id="WP_011867812.1">
    <property type="nucleotide sequence ID" value="NC_009135.1"/>
</dbReference>
<dbReference type="SMR" id="A4FVY2"/>
<dbReference type="STRING" id="402880.MmarC5_0033"/>
<dbReference type="GeneID" id="4928358"/>
<dbReference type="KEGG" id="mmq:MmarC5_0033"/>
<dbReference type="eggNOG" id="arCOG04070">
    <property type="taxonomic scope" value="Archaea"/>
</dbReference>
<dbReference type="HOGENOM" id="CLU_033361_2_0_2"/>
<dbReference type="OrthoDB" id="6121at2157"/>
<dbReference type="Proteomes" id="UP000000253">
    <property type="component" value="Chromosome"/>
</dbReference>
<dbReference type="GO" id="GO:0022625">
    <property type="term" value="C:cytosolic large ribosomal subunit"/>
    <property type="evidence" value="ECO:0007669"/>
    <property type="project" value="TreeGrafter"/>
</dbReference>
<dbReference type="GO" id="GO:0019843">
    <property type="term" value="F:rRNA binding"/>
    <property type="evidence" value="ECO:0007669"/>
    <property type="project" value="UniProtKB-UniRule"/>
</dbReference>
<dbReference type="GO" id="GO:0003735">
    <property type="term" value="F:structural constituent of ribosome"/>
    <property type="evidence" value="ECO:0007669"/>
    <property type="project" value="InterPro"/>
</dbReference>
<dbReference type="GO" id="GO:0006412">
    <property type="term" value="P:translation"/>
    <property type="evidence" value="ECO:0007669"/>
    <property type="project" value="UniProtKB-UniRule"/>
</dbReference>
<dbReference type="Gene3D" id="3.30.1430.10">
    <property type="match status" value="1"/>
</dbReference>
<dbReference type="Gene3D" id="4.10.960.10">
    <property type="entry name" value="Ribosomal protein L3, domain 3"/>
    <property type="match status" value="1"/>
</dbReference>
<dbReference type="Gene3D" id="2.40.30.10">
    <property type="entry name" value="Translation factors"/>
    <property type="match status" value="1"/>
</dbReference>
<dbReference type="HAMAP" id="MF_01325_A">
    <property type="entry name" value="Ribosomal_uL3_A"/>
    <property type="match status" value="1"/>
</dbReference>
<dbReference type="InterPro" id="IPR045077">
    <property type="entry name" value="L3_arc_euk"/>
</dbReference>
<dbReference type="InterPro" id="IPR044892">
    <property type="entry name" value="Ribosomal_L3_dom_3_arc_sf"/>
</dbReference>
<dbReference type="InterPro" id="IPR000597">
    <property type="entry name" value="Ribosomal_uL3"/>
</dbReference>
<dbReference type="InterPro" id="IPR019928">
    <property type="entry name" value="Ribosomal_uL3_arc"/>
</dbReference>
<dbReference type="InterPro" id="IPR019926">
    <property type="entry name" value="Ribosomal_uL3_CS"/>
</dbReference>
<dbReference type="InterPro" id="IPR009000">
    <property type="entry name" value="Transl_B-barrel_sf"/>
</dbReference>
<dbReference type="NCBIfam" id="TIGR03626">
    <property type="entry name" value="L3_arch"/>
    <property type="match status" value="1"/>
</dbReference>
<dbReference type="NCBIfam" id="NF003261">
    <property type="entry name" value="PRK04231.1"/>
    <property type="match status" value="1"/>
</dbReference>
<dbReference type="PANTHER" id="PTHR11363">
    <property type="entry name" value="60S RIBOSOMAL PROTEIN L3-RELATED"/>
    <property type="match status" value="1"/>
</dbReference>
<dbReference type="PANTHER" id="PTHR11363:SF5">
    <property type="entry name" value="LARGE RIBOSOMAL SUBUNIT PROTEIN UL3"/>
    <property type="match status" value="1"/>
</dbReference>
<dbReference type="Pfam" id="PF00297">
    <property type="entry name" value="Ribosomal_L3"/>
    <property type="match status" value="1"/>
</dbReference>
<dbReference type="SUPFAM" id="SSF50447">
    <property type="entry name" value="Translation proteins"/>
    <property type="match status" value="1"/>
</dbReference>
<dbReference type="PROSITE" id="PS00474">
    <property type="entry name" value="RIBOSOMAL_L3"/>
    <property type="match status" value="1"/>
</dbReference>
<feature type="chain" id="PRO_1000052080" description="Large ribosomal subunit protein uL3">
    <location>
        <begin position="1"/>
        <end position="334"/>
    </location>
</feature>
<feature type="region of interest" description="Disordered" evidence="2">
    <location>
        <begin position="1"/>
        <end position="21"/>
    </location>
</feature>
<feature type="compositionally biased region" description="Basic residues" evidence="2">
    <location>
        <begin position="1"/>
        <end position="10"/>
    </location>
</feature>
<keyword id="KW-0687">Ribonucleoprotein</keyword>
<keyword id="KW-0689">Ribosomal protein</keyword>
<keyword id="KW-0694">RNA-binding</keyword>
<keyword id="KW-0699">rRNA-binding</keyword>
<evidence type="ECO:0000255" key="1">
    <source>
        <dbReference type="HAMAP-Rule" id="MF_01325"/>
    </source>
</evidence>
<evidence type="ECO:0000256" key="2">
    <source>
        <dbReference type="SAM" id="MobiDB-lite"/>
    </source>
</evidence>
<evidence type="ECO:0000305" key="3"/>